<sequence length="268" mass="30580">MNIEVKMEKEKSLGNQALIRGLRLLDILSNYPNGCPLAKLAELANLNKSTAHRLLQGLQNEGYVKPANAAGSYRLTIKCLSIGQKVLSSMNIIHVASPYLEQLNLKLGETINFSKREDDHAIMIYKLEPTNGMLKTRAYIGQYLKLYCSAMGKIFLAYEKKVDYLSHYWQSHQREIKKLTRYTITELDDIKLELETIRQTAYAMDREENELGVTCIACPIFDSFGQVEYAISVSMSIYRLNKFGTDAFLQEIRKTAEQISLELGYENI</sequence>
<gene>
    <name type="ordered locus">HI_1032</name>
</gene>
<organism>
    <name type="scientific">Haemophilus influenzae (strain ATCC 51907 / DSM 11121 / KW20 / Rd)</name>
    <dbReference type="NCBI Taxonomy" id="71421"/>
    <lineage>
        <taxon>Bacteria</taxon>
        <taxon>Pseudomonadati</taxon>
        <taxon>Pseudomonadota</taxon>
        <taxon>Gammaproteobacteria</taxon>
        <taxon>Pasteurellales</taxon>
        <taxon>Pasteurellaceae</taxon>
        <taxon>Haemophilus</taxon>
    </lineage>
</organism>
<dbReference type="EMBL" id="L42023">
    <property type="protein sequence ID" value="AAC22692.1"/>
    <property type="molecule type" value="Genomic_DNA"/>
</dbReference>
<dbReference type="PIR" id="D64165">
    <property type="entry name" value="D64165"/>
</dbReference>
<dbReference type="RefSeq" id="NP_439192.1">
    <property type="nucleotide sequence ID" value="NC_000907.1"/>
</dbReference>
<dbReference type="SMR" id="P44996"/>
<dbReference type="STRING" id="71421.HI_1032"/>
<dbReference type="EnsemblBacteria" id="AAC22692">
    <property type="protein sequence ID" value="AAC22692"/>
    <property type="gene ID" value="HI_1032"/>
</dbReference>
<dbReference type="KEGG" id="hin:HI_1032"/>
<dbReference type="PATRIC" id="fig|71421.8.peg.1076"/>
<dbReference type="eggNOG" id="COG1414">
    <property type="taxonomic scope" value="Bacteria"/>
</dbReference>
<dbReference type="HOGENOM" id="CLU_062618_7_1_6"/>
<dbReference type="OrthoDB" id="9807558at2"/>
<dbReference type="PhylomeDB" id="P44996"/>
<dbReference type="BioCyc" id="HINF71421:G1GJ1-1072-MONOMER"/>
<dbReference type="Proteomes" id="UP000000579">
    <property type="component" value="Chromosome"/>
</dbReference>
<dbReference type="GO" id="GO:0003677">
    <property type="term" value="F:DNA binding"/>
    <property type="evidence" value="ECO:0000318"/>
    <property type="project" value="GO_Central"/>
</dbReference>
<dbReference type="GO" id="GO:0003700">
    <property type="term" value="F:DNA-binding transcription factor activity"/>
    <property type="evidence" value="ECO:0000318"/>
    <property type="project" value="GO_Central"/>
</dbReference>
<dbReference type="GO" id="GO:0045892">
    <property type="term" value="P:negative regulation of DNA-templated transcription"/>
    <property type="evidence" value="ECO:0000318"/>
    <property type="project" value="GO_Central"/>
</dbReference>
<dbReference type="Gene3D" id="3.30.450.40">
    <property type="match status" value="1"/>
</dbReference>
<dbReference type="Gene3D" id="1.10.10.10">
    <property type="entry name" value="Winged helix-like DNA-binding domain superfamily/Winged helix DNA-binding domain"/>
    <property type="match status" value="1"/>
</dbReference>
<dbReference type="InterPro" id="IPR029016">
    <property type="entry name" value="GAF-like_dom_sf"/>
</dbReference>
<dbReference type="InterPro" id="IPR050707">
    <property type="entry name" value="HTH_MetabolicPath_Reg"/>
</dbReference>
<dbReference type="InterPro" id="IPR014757">
    <property type="entry name" value="Tscrpt_reg_IclR_C"/>
</dbReference>
<dbReference type="InterPro" id="IPR005471">
    <property type="entry name" value="Tscrpt_reg_IclR_N"/>
</dbReference>
<dbReference type="InterPro" id="IPR036388">
    <property type="entry name" value="WH-like_DNA-bd_sf"/>
</dbReference>
<dbReference type="InterPro" id="IPR036390">
    <property type="entry name" value="WH_DNA-bd_sf"/>
</dbReference>
<dbReference type="PANTHER" id="PTHR30136:SF19">
    <property type="entry name" value="DNA-BINDING TRANSCRIPTIONAL REPRESSOR YIAJ"/>
    <property type="match status" value="1"/>
</dbReference>
<dbReference type="PANTHER" id="PTHR30136">
    <property type="entry name" value="HELIX-TURN-HELIX TRANSCRIPTIONAL REGULATOR, ICLR FAMILY"/>
    <property type="match status" value="1"/>
</dbReference>
<dbReference type="Pfam" id="PF09339">
    <property type="entry name" value="HTH_IclR"/>
    <property type="match status" value="1"/>
</dbReference>
<dbReference type="Pfam" id="PF01614">
    <property type="entry name" value="IclR_C"/>
    <property type="match status" value="1"/>
</dbReference>
<dbReference type="SMART" id="SM00346">
    <property type="entry name" value="HTH_ICLR"/>
    <property type="match status" value="1"/>
</dbReference>
<dbReference type="SUPFAM" id="SSF55781">
    <property type="entry name" value="GAF domain-like"/>
    <property type="match status" value="1"/>
</dbReference>
<dbReference type="SUPFAM" id="SSF46785">
    <property type="entry name" value="Winged helix' DNA-binding domain"/>
    <property type="match status" value="1"/>
</dbReference>
<dbReference type="PROSITE" id="PS51077">
    <property type="entry name" value="HTH_ICLR"/>
    <property type="match status" value="1"/>
</dbReference>
<dbReference type="PROSITE" id="PS51078">
    <property type="entry name" value="ICLR_ED"/>
    <property type="match status" value="1"/>
</dbReference>
<evidence type="ECO:0000255" key="1">
    <source>
        <dbReference type="PROSITE-ProRule" id="PRU00393"/>
    </source>
</evidence>
<evidence type="ECO:0000255" key="2">
    <source>
        <dbReference type="PROSITE-ProRule" id="PRU00394"/>
    </source>
</evidence>
<reference key="1">
    <citation type="journal article" date="1995" name="Science">
        <title>Whole-genome random sequencing and assembly of Haemophilus influenzae Rd.</title>
        <authorList>
            <person name="Fleischmann R.D."/>
            <person name="Adams M.D."/>
            <person name="White O."/>
            <person name="Clayton R.A."/>
            <person name="Kirkness E.F."/>
            <person name="Kerlavage A.R."/>
            <person name="Bult C.J."/>
            <person name="Tomb J.-F."/>
            <person name="Dougherty B.A."/>
            <person name="Merrick J.M."/>
            <person name="McKenney K."/>
            <person name="Sutton G.G."/>
            <person name="FitzHugh W."/>
            <person name="Fields C.A."/>
            <person name="Gocayne J.D."/>
            <person name="Scott J.D."/>
            <person name="Shirley R."/>
            <person name="Liu L.-I."/>
            <person name="Glodek A."/>
            <person name="Kelley J.M."/>
            <person name="Weidman J.F."/>
            <person name="Phillips C.A."/>
            <person name="Spriggs T."/>
            <person name="Hedblom E."/>
            <person name="Cotton M.D."/>
            <person name="Utterback T.R."/>
            <person name="Hanna M.C."/>
            <person name="Nguyen D.T."/>
            <person name="Saudek D.M."/>
            <person name="Brandon R.C."/>
            <person name="Fine L.D."/>
            <person name="Fritchman J.L."/>
            <person name="Fuhrmann J.L."/>
            <person name="Geoghagen N.S.M."/>
            <person name="Gnehm C.L."/>
            <person name="McDonald L.A."/>
            <person name="Small K.V."/>
            <person name="Fraser C.M."/>
            <person name="Smith H.O."/>
            <person name="Venter J.C."/>
        </authorList>
    </citation>
    <scope>NUCLEOTIDE SEQUENCE [LARGE SCALE GENOMIC DNA]</scope>
    <source>
        <strain>ATCC 51907 / DSM 11121 / KW20 / Rd</strain>
    </source>
</reference>
<accession>P44996</accession>
<keyword id="KW-0238">DNA-binding</keyword>
<keyword id="KW-1185">Reference proteome</keyword>
<keyword id="KW-0804">Transcription</keyword>
<keyword id="KW-0805">Transcription regulation</keyword>
<protein>
    <recommendedName>
        <fullName>Uncharacterized HTH-type transcriptional regulator HI_1032</fullName>
    </recommendedName>
</protein>
<proteinExistence type="predicted"/>
<name>Y1032_HAEIN</name>
<feature type="chain" id="PRO_0000201772" description="Uncharacterized HTH-type transcriptional regulator HI_1032">
    <location>
        <begin position="1"/>
        <end position="268"/>
    </location>
</feature>
<feature type="domain" description="HTH iclR-type" evidence="1">
    <location>
        <begin position="15"/>
        <end position="77"/>
    </location>
</feature>
<feature type="domain" description="IclR-ED" evidence="2">
    <location>
        <begin position="92"/>
        <end position="265"/>
    </location>
</feature>
<feature type="DNA-binding region" description="H-T-H motif" evidence="1">
    <location>
        <begin position="37"/>
        <end position="56"/>
    </location>
</feature>